<name>BORG5_MOUSE</name>
<reference key="1">
    <citation type="journal article" date="2005" name="Science">
        <title>The transcriptional landscape of the mammalian genome.</title>
        <authorList>
            <person name="Carninci P."/>
            <person name="Kasukawa T."/>
            <person name="Katayama S."/>
            <person name="Gough J."/>
            <person name="Frith M.C."/>
            <person name="Maeda N."/>
            <person name="Oyama R."/>
            <person name="Ravasi T."/>
            <person name="Lenhard B."/>
            <person name="Wells C."/>
            <person name="Kodzius R."/>
            <person name="Shimokawa K."/>
            <person name="Bajic V.B."/>
            <person name="Brenner S.E."/>
            <person name="Batalov S."/>
            <person name="Forrest A.R."/>
            <person name="Zavolan M."/>
            <person name="Davis M.J."/>
            <person name="Wilming L.G."/>
            <person name="Aidinis V."/>
            <person name="Allen J.E."/>
            <person name="Ambesi-Impiombato A."/>
            <person name="Apweiler R."/>
            <person name="Aturaliya R.N."/>
            <person name="Bailey T.L."/>
            <person name="Bansal M."/>
            <person name="Baxter L."/>
            <person name="Beisel K.W."/>
            <person name="Bersano T."/>
            <person name="Bono H."/>
            <person name="Chalk A.M."/>
            <person name="Chiu K.P."/>
            <person name="Choudhary V."/>
            <person name="Christoffels A."/>
            <person name="Clutterbuck D.R."/>
            <person name="Crowe M.L."/>
            <person name="Dalla E."/>
            <person name="Dalrymple B.P."/>
            <person name="de Bono B."/>
            <person name="Della Gatta G."/>
            <person name="di Bernardo D."/>
            <person name="Down T."/>
            <person name="Engstrom P."/>
            <person name="Fagiolini M."/>
            <person name="Faulkner G."/>
            <person name="Fletcher C.F."/>
            <person name="Fukushima T."/>
            <person name="Furuno M."/>
            <person name="Futaki S."/>
            <person name="Gariboldi M."/>
            <person name="Georgii-Hemming P."/>
            <person name="Gingeras T.R."/>
            <person name="Gojobori T."/>
            <person name="Green R.E."/>
            <person name="Gustincich S."/>
            <person name="Harbers M."/>
            <person name="Hayashi Y."/>
            <person name="Hensch T.K."/>
            <person name="Hirokawa N."/>
            <person name="Hill D."/>
            <person name="Huminiecki L."/>
            <person name="Iacono M."/>
            <person name="Ikeo K."/>
            <person name="Iwama A."/>
            <person name="Ishikawa T."/>
            <person name="Jakt M."/>
            <person name="Kanapin A."/>
            <person name="Katoh M."/>
            <person name="Kawasawa Y."/>
            <person name="Kelso J."/>
            <person name="Kitamura H."/>
            <person name="Kitano H."/>
            <person name="Kollias G."/>
            <person name="Krishnan S.P."/>
            <person name="Kruger A."/>
            <person name="Kummerfeld S.K."/>
            <person name="Kurochkin I.V."/>
            <person name="Lareau L.F."/>
            <person name="Lazarevic D."/>
            <person name="Lipovich L."/>
            <person name="Liu J."/>
            <person name="Liuni S."/>
            <person name="McWilliam S."/>
            <person name="Madan Babu M."/>
            <person name="Madera M."/>
            <person name="Marchionni L."/>
            <person name="Matsuda H."/>
            <person name="Matsuzawa S."/>
            <person name="Miki H."/>
            <person name="Mignone F."/>
            <person name="Miyake S."/>
            <person name="Morris K."/>
            <person name="Mottagui-Tabar S."/>
            <person name="Mulder N."/>
            <person name="Nakano N."/>
            <person name="Nakauchi H."/>
            <person name="Ng P."/>
            <person name="Nilsson R."/>
            <person name="Nishiguchi S."/>
            <person name="Nishikawa S."/>
            <person name="Nori F."/>
            <person name="Ohara O."/>
            <person name="Okazaki Y."/>
            <person name="Orlando V."/>
            <person name="Pang K.C."/>
            <person name="Pavan W.J."/>
            <person name="Pavesi G."/>
            <person name="Pesole G."/>
            <person name="Petrovsky N."/>
            <person name="Piazza S."/>
            <person name="Reed J."/>
            <person name="Reid J.F."/>
            <person name="Ring B.Z."/>
            <person name="Ringwald M."/>
            <person name="Rost B."/>
            <person name="Ruan Y."/>
            <person name="Salzberg S.L."/>
            <person name="Sandelin A."/>
            <person name="Schneider C."/>
            <person name="Schoenbach C."/>
            <person name="Sekiguchi K."/>
            <person name="Semple C.A."/>
            <person name="Seno S."/>
            <person name="Sessa L."/>
            <person name="Sheng Y."/>
            <person name="Shibata Y."/>
            <person name="Shimada H."/>
            <person name="Shimada K."/>
            <person name="Silva D."/>
            <person name="Sinclair B."/>
            <person name="Sperling S."/>
            <person name="Stupka E."/>
            <person name="Sugiura K."/>
            <person name="Sultana R."/>
            <person name="Takenaka Y."/>
            <person name="Taki K."/>
            <person name="Tammoja K."/>
            <person name="Tan S.L."/>
            <person name="Tang S."/>
            <person name="Taylor M.S."/>
            <person name="Tegner J."/>
            <person name="Teichmann S.A."/>
            <person name="Ueda H.R."/>
            <person name="van Nimwegen E."/>
            <person name="Verardo R."/>
            <person name="Wei C.L."/>
            <person name="Yagi K."/>
            <person name="Yamanishi H."/>
            <person name="Zabarovsky E."/>
            <person name="Zhu S."/>
            <person name="Zimmer A."/>
            <person name="Hide W."/>
            <person name="Bult C."/>
            <person name="Grimmond S.M."/>
            <person name="Teasdale R.D."/>
            <person name="Liu E.T."/>
            <person name="Brusic V."/>
            <person name="Quackenbush J."/>
            <person name="Wahlestedt C."/>
            <person name="Mattick J.S."/>
            <person name="Hume D.A."/>
            <person name="Kai C."/>
            <person name="Sasaki D."/>
            <person name="Tomaru Y."/>
            <person name="Fukuda S."/>
            <person name="Kanamori-Katayama M."/>
            <person name="Suzuki M."/>
            <person name="Aoki J."/>
            <person name="Arakawa T."/>
            <person name="Iida J."/>
            <person name="Imamura K."/>
            <person name="Itoh M."/>
            <person name="Kato T."/>
            <person name="Kawaji H."/>
            <person name="Kawagashira N."/>
            <person name="Kawashima T."/>
            <person name="Kojima M."/>
            <person name="Kondo S."/>
            <person name="Konno H."/>
            <person name="Nakano K."/>
            <person name="Ninomiya N."/>
            <person name="Nishio T."/>
            <person name="Okada M."/>
            <person name="Plessy C."/>
            <person name="Shibata K."/>
            <person name="Shiraki T."/>
            <person name="Suzuki S."/>
            <person name="Tagami M."/>
            <person name="Waki K."/>
            <person name="Watahiki A."/>
            <person name="Okamura-Oho Y."/>
            <person name="Suzuki H."/>
            <person name="Kawai J."/>
            <person name="Hayashizaki Y."/>
        </authorList>
    </citation>
    <scope>NUCLEOTIDE SEQUENCE [LARGE SCALE MRNA]</scope>
    <source>
        <strain>C57BL/6J</strain>
        <tissue>Pancreas</tissue>
    </source>
</reference>
<reference key="2">
    <citation type="journal article" date="2004" name="Genome Res.">
        <title>The status, quality, and expansion of the NIH full-length cDNA project: the Mammalian Gene Collection (MGC).</title>
        <authorList>
            <consortium name="The MGC Project Team"/>
        </authorList>
    </citation>
    <scope>NUCLEOTIDE SEQUENCE [LARGE SCALE MRNA]</scope>
    <source>
        <strain>FVB/N</strain>
        <strain>FVB/N-3</strain>
        <tissue>Mammary tumor</tissue>
    </source>
</reference>
<reference key="3">
    <citation type="journal article" date="2004" name="Mol. Cell. Proteomics">
        <title>Phosphoproteomic analysis of the developing mouse brain.</title>
        <authorList>
            <person name="Ballif B.A."/>
            <person name="Villen J."/>
            <person name="Beausoleil S.A."/>
            <person name="Schwartz D."/>
            <person name="Gygi S.P."/>
        </authorList>
    </citation>
    <scope>PHOSPHORYLATION [LARGE SCALE ANALYSIS] AT SER-121</scope>
    <scope>IDENTIFICATION BY MASS SPECTROMETRY [LARGE SCALE ANALYSIS]</scope>
    <source>
        <tissue>Embryonic brain</tissue>
    </source>
</reference>
<reference key="4">
    <citation type="journal article" date="2010" name="Cell">
        <title>A tissue-specific atlas of mouse protein phosphorylation and expression.</title>
        <authorList>
            <person name="Huttlin E.L."/>
            <person name="Jedrychowski M.P."/>
            <person name="Elias J.E."/>
            <person name="Goswami T."/>
            <person name="Rad R."/>
            <person name="Beausoleil S.A."/>
            <person name="Villen J."/>
            <person name="Haas W."/>
            <person name="Sowa M.E."/>
            <person name="Gygi S.P."/>
        </authorList>
    </citation>
    <scope>PHOSPHORYLATION [LARGE SCALE ANALYSIS] AT THR-34; SER-39; SER-121; SER-139; SER-207; SER-368 AND SER-371</scope>
    <scope>IDENTIFICATION BY MASS SPECTROMETRY [LARGE SCALE ANALYSIS]</scope>
    <source>
        <tissue>Brain</tissue>
        <tissue>Brown adipose tissue</tissue>
        <tissue>Heart</tissue>
        <tissue>Kidney</tissue>
        <tissue>Liver</tissue>
        <tissue>Lung</tissue>
        <tissue>Pancreas</tissue>
        <tissue>Spleen</tissue>
        <tissue>Testis</tissue>
    </source>
</reference>
<reference key="5">
    <citation type="journal article" date="2014" name="Mol. Cell. Proteomics">
        <title>Immunoaffinity enrichment and mass spectrometry analysis of protein methylation.</title>
        <authorList>
            <person name="Guo A."/>
            <person name="Gu H."/>
            <person name="Zhou J."/>
            <person name="Mulhern D."/>
            <person name="Wang Y."/>
            <person name="Lee K.A."/>
            <person name="Yang V."/>
            <person name="Aguiar M."/>
            <person name="Kornhauser J."/>
            <person name="Jia X."/>
            <person name="Ren J."/>
            <person name="Beausoleil S.A."/>
            <person name="Silva J.C."/>
            <person name="Vemulapalli V."/>
            <person name="Bedford M.T."/>
            <person name="Comb M.J."/>
        </authorList>
    </citation>
    <scope>METHYLATION [LARGE SCALE ANALYSIS] AT ARG-53</scope>
    <scope>IDENTIFICATION BY MASS SPECTROMETRY [LARGE SCALE ANALYSIS]</scope>
    <source>
        <tissue>Brain</tissue>
        <tissue>Embryo</tissue>
    </source>
</reference>
<proteinExistence type="evidence at protein level"/>
<dbReference type="EMBL" id="AK007896">
    <property type="protein sequence ID" value="BAB25335.1"/>
    <property type="molecule type" value="mRNA"/>
</dbReference>
<dbReference type="EMBL" id="BC016250">
    <property type="protein sequence ID" value="AAH16250.1"/>
    <property type="molecule type" value="mRNA"/>
</dbReference>
<dbReference type="EMBL" id="BC083130">
    <property type="protein sequence ID" value="AAH83130.1"/>
    <property type="molecule type" value="mRNA"/>
</dbReference>
<dbReference type="CCDS" id="CCDS27624.1"/>
<dbReference type="RefSeq" id="NP_081495.1">
    <property type="nucleotide sequence ID" value="NM_027219.3"/>
</dbReference>
<dbReference type="BioGRID" id="222639">
    <property type="interactions" value="2"/>
</dbReference>
<dbReference type="FunCoup" id="Q91W92">
    <property type="interactions" value="159"/>
</dbReference>
<dbReference type="IntAct" id="Q91W92">
    <property type="interactions" value="1"/>
</dbReference>
<dbReference type="MINT" id="Q91W92"/>
<dbReference type="STRING" id="10090.ENSMUSP00000060930"/>
<dbReference type="GlyGen" id="Q91W92">
    <property type="glycosylation" value="2 sites, 1 N-linked glycan (1 site)"/>
</dbReference>
<dbReference type="iPTMnet" id="Q91W92"/>
<dbReference type="PhosphoSitePlus" id="Q91W92"/>
<dbReference type="SwissPalm" id="Q91W92"/>
<dbReference type="jPOST" id="Q91W92"/>
<dbReference type="PaxDb" id="10090-ENSMUSP00000060930"/>
<dbReference type="PeptideAtlas" id="Q91W92"/>
<dbReference type="ProteomicsDB" id="265451"/>
<dbReference type="Pumba" id="Q91W92"/>
<dbReference type="DNASU" id="104445"/>
<dbReference type="GeneID" id="104445"/>
<dbReference type="KEGG" id="mmu:104445"/>
<dbReference type="UCSC" id="uc007wrl.1">
    <property type="organism name" value="mouse"/>
</dbReference>
<dbReference type="AGR" id="MGI:1929763"/>
<dbReference type="CTD" id="11135"/>
<dbReference type="MGI" id="MGI:1929763">
    <property type="gene designation" value="Cdc42ep1"/>
</dbReference>
<dbReference type="eggNOG" id="ENOG502RZ2H">
    <property type="taxonomic scope" value="Eukaryota"/>
</dbReference>
<dbReference type="InParanoid" id="Q91W92"/>
<dbReference type="OrthoDB" id="9887345at2759"/>
<dbReference type="PhylomeDB" id="Q91W92"/>
<dbReference type="TreeFam" id="TF331725"/>
<dbReference type="Reactome" id="R-MMU-9013149">
    <property type="pathway name" value="RAC1 GTPase cycle"/>
</dbReference>
<dbReference type="Reactome" id="R-MMU-9013404">
    <property type="pathway name" value="RAC2 GTPase cycle"/>
</dbReference>
<dbReference type="Reactome" id="R-MMU-9013406">
    <property type="pathway name" value="RHOQ GTPase cycle"/>
</dbReference>
<dbReference type="Reactome" id="R-MMU-9013408">
    <property type="pathway name" value="RHOG GTPase cycle"/>
</dbReference>
<dbReference type="Reactome" id="R-MMU-9013423">
    <property type="pathway name" value="RAC3 GTPase cycle"/>
</dbReference>
<dbReference type="BioGRID-ORCS" id="104445">
    <property type="hits" value="7 hits in 76 CRISPR screens"/>
</dbReference>
<dbReference type="ChiTaRS" id="Cdc42ep1">
    <property type="organism name" value="mouse"/>
</dbReference>
<dbReference type="PRO" id="PR:Q91W92"/>
<dbReference type="Proteomes" id="UP000000589">
    <property type="component" value="Unplaced"/>
</dbReference>
<dbReference type="RNAct" id="Q91W92">
    <property type="molecule type" value="protein"/>
</dbReference>
<dbReference type="GO" id="GO:0005737">
    <property type="term" value="C:cytoplasm"/>
    <property type="evidence" value="ECO:0000314"/>
    <property type="project" value="MGI"/>
</dbReference>
<dbReference type="GO" id="GO:0005856">
    <property type="term" value="C:cytoskeleton"/>
    <property type="evidence" value="ECO:0007669"/>
    <property type="project" value="UniProtKB-SubCell"/>
</dbReference>
<dbReference type="GO" id="GO:0012505">
    <property type="term" value="C:endomembrane system"/>
    <property type="evidence" value="ECO:0007669"/>
    <property type="project" value="UniProtKB-SubCell"/>
</dbReference>
<dbReference type="GO" id="GO:0016020">
    <property type="term" value="C:membrane"/>
    <property type="evidence" value="ECO:0007669"/>
    <property type="project" value="UniProtKB-KW"/>
</dbReference>
<dbReference type="GO" id="GO:0008360">
    <property type="term" value="P:regulation of cell shape"/>
    <property type="evidence" value="ECO:0007669"/>
    <property type="project" value="UniProtKB-KW"/>
</dbReference>
<dbReference type="GO" id="GO:0007266">
    <property type="term" value="P:Rho protein signal transduction"/>
    <property type="evidence" value="ECO:0000314"/>
    <property type="project" value="MGI"/>
</dbReference>
<dbReference type="InterPro" id="IPR029273">
    <property type="entry name" value="Cdc42_effect-like"/>
</dbReference>
<dbReference type="InterPro" id="IPR051296">
    <property type="entry name" value="Cdc42_Effector_BORG/CEP"/>
</dbReference>
<dbReference type="InterPro" id="IPR000095">
    <property type="entry name" value="CRIB_dom"/>
</dbReference>
<dbReference type="PANTHER" id="PTHR15344:SF7">
    <property type="entry name" value="CDC42 EFFECTOR PROTEIN 1"/>
    <property type="match status" value="1"/>
</dbReference>
<dbReference type="PANTHER" id="PTHR15344">
    <property type="entry name" value="CDC42 EFFECTOR PROTEIN BORG"/>
    <property type="match status" value="1"/>
</dbReference>
<dbReference type="Pfam" id="PF14957">
    <property type="entry name" value="BORG_CEP"/>
    <property type="match status" value="1"/>
</dbReference>
<dbReference type="Pfam" id="PF00786">
    <property type="entry name" value="PBD"/>
    <property type="match status" value="1"/>
</dbReference>
<dbReference type="SMART" id="SM00285">
    <property type="entry name" value="PBD"/>
    <property type="match status" value="1"/>
</dbReference>
<dbReference type="PROSITE" id="PS50108">
    <property type="entry name" value="CRIB"/>
    <property type="match status" value="1"/>
</dbReference>
<gene>
    <name type="primary">Cdc42ep1</name>
    <name type="synonym">Borg5</name>
    <name type="synonym">Cep1</name>
</gene>
<accession>Q91W92</accession>
<accession>Q9D8M1</accession>
<comment type="function">
    <text evidence="1">Probably involved in the organization of the actin cytoskeleton. Induced membrane extensions in fibroblasts (By similarity).</text>
</comment>
<comment type="subunit">
    <text evidence="1">Interacts with RHOQ and CDC42, in a GTP-dependent manner.</text>
</comment>
<comment type="subcellular location">
    <subcellularLocation>
        <location evidence="1">Endomembrane system</location>
        <topology evidence="1">Peripheral membrane protein</topology>
    </subcellularLocation>
    <subcellularLocation>
        <location evidence="1">Cytoplasm</location>
        <location evidence="1">Cytoskeleton</location>
    </subcellularLocation>
</comment>
<comment type="domain">
    <text evidence="1">The CRIB domain mediates interaction with CDC42.</text>
</comment>
<comment type="similarity">
    <text evidence="6">Belongs to the BORG/CEP family.</text>
</comment>
<protein>
    <recommendedName>
        <fullName>Cdc42 effector protein 1</fullName>
    </recommendedName>
    <alternativeName>
        <fullName>Binder of Rho GTPases 5</fullName>
    </alternativeName>
</protein>
<evidence type="ECO:0000250" key="1"/>
<evidence type="ECO:0000250" key="2">
    <source>
        <dbReference type="UniProtKB" id="A1A5P0"/>
    </source>
</evidence>
<evidence type="ECO:0000250" key="3">
    <source>
        <dbReference type="UniProtKB" id="Q00587"/>
    </source>
</evidence>
<evidence type="ECO:0000255" key="4">
    <source>
        <dbReference type="PROSITE-ProRule" id="PRU00057"/>
    </source>
</evidence>
<evidence type="ECO:0000256" key="5">
    <source>
        <dbReference type="SAM" id="MobiDB-lite"/>
    </source>
</evidence>
<evidence type="ECO:0000305" key="6"/>
<evidence type="ECO:0007744" key="7">
    <source>
    </source>
</evidence>
<evidence type="ECO:0007744" key="8">
    <source>
    </source>
</evidence>
<evidence type="ECO:0007744" key="9">
    <source>
    </source>
</evidence>
<sequence>MPGPQGGTGAPTMSLGKLSPVGWVSSSHGKRRLTADMISPPLGDFRHTMHVGRGGDVFGDTSFLSNHGGRSGNTHRSPRSFLARKLQQVRRVGVPPRRMASPAAPSPAPPPISPIIKNAISLPQLNQATYDSLVMGKLSFDSTPASSTDGHSGYGLESGFCTISRLPRVEKHSNRDRDRDPDHSQDREQSSFPSEPTPNPELRRSDSLLSFRFDLDLGPSLLSELLGVMSLSEAPAAETPVPTANPPAPAANPAPTAKPPAHAITTLDAVTSLPASAVTSLPAPAAASSPSRGHFPNGVTSVLGPAAEAKPSPVGEGPQVPSNMTFDRHGASWGASRASWGASRASRHYTEMDARRELAGVLPQVHGSWESLNEDWSTPPASVRAPVPTSVQVNAFEFADAEEDDEVKV</sequence>
<feature type="chain" id="PRO_0000212658" description="Cdc42 effector protein 1">
    <location>
        <begin position="1"/>
        <end position="409"/>
    </location>
</feature>
<feature type="domain" description="CRIB" evidence="4">
    <location>
        <begin position="38"/>
        <end position="52"/>
    </location>
</feature>
<feature type="repeat" description="1">
    <location>
        <begin position="235"/>
        <end position="241"/>
    </location>
</feature>
<feature type="repeat" description="2">
    <location>
        <begin position="242"/>
        <end position="248"/>
    </location>
</feature>
<feature type="repeat" description="3">
    <location>
        <begin position="255"/>
        <end position="261"/>
    </location>
</feature>
<feature type="region of interest" description="Disordered" evidence="5">
    <location>
        <begin position="1"/>
        <end position="29"/>
    </location>
</feature>
<feature type="region of interest" description="Disordered" evidence="5">
    <location>
        <begin position="167"/>
        <end position="203"/>
    </location>
</feature>
<feature type="region of interest" description="3 X 7 AA tandem repeats of [PT]-[AT]-A-[ENT]-[PT]-[PTS]-[AG]">
    <location>
        <begin position="235"/>
        <end position="284"/>
    </location>
</feature>
<feature type="region of interest" description="Disordered" evidence="5">
    <location>
        <begin position="237"/>
        <end position="260"/>
    </location>
</feature>
<feature type="region of interest" description="Disordered" evidence="5">
    <location>
        <begin position="282"/>
        <end position="329"/>
    </location>
</feature>
<feature type="compositionally biased region" description="Basic and acidic residues" evidence="5">
    <location>
        <begin position="167"/>
        <end position="189"/>
    </location>
</feature>
<feature type="compositionally biased region" description="Pro residues" evidence="5">
    <location>
        <begin position="243"/>
        <end position="258"/>
    </location>
</feature>
<feature type="compositionally biased region" description="Low complexity" evidence="5">
    <location>
        <begin position="282"/>
        <end position="291"/>
    </location>
</feature>
<feature type="modified residue" description="Phosphoserine" evidence="3">
    <location>
        <position position="19"/>
    </location>
</feature>
<feature type="modified residue" description="Phosphoserine" evidence="3">
    <location>
        <position position="27"/>
    </location>
</feature>
<feature type="modified residue" description="Phosphothreonine" evidence="8">
    <location>
        <position position="34"/>
    </location>
</feature>
<feature type="modified residue" description="Phosphoserine" evidence="8">
    <location>
        <position position="39"/>
    </location>
</feature>
<feature type="modified residue" description="Omega-N-methylarginine" evidence="9">
    <location>
        <position position="53"/>
    </location>
</feature>
<feature type="modified residue" description="Phosphoserine" evidence="3">
    <location>
        <position position="65"/>
    </location>
</feature>
<feature type="modified residue" description="Phosphoserine" evidence="3">
    <location>
        <position position="77"/>
    </location>
</feature>
<feature type="modified residue" description="Phosphoserine" evidence="3">
    <location>
        <position position="101"/>
    </location>
</feature>
<feature type="modified residue" description="Phosphoserine" evidence="3">
    <location>
        <position position="113"/>
    </location>
</feature>
<feature type="modified residue" description="Phosphoserine" evidence="7 8">
    <location>
        <position position="121"/>
    </location>
</feature>
<feature type="modified residue" description="Phosphoserine" evidence="8">
    <location>
        <position position="139"/>
    </location>
</feature>
<feature type="modified residue" description="Phosphoserine" evidence="3">
    <location>
        <position position="191"/>
    </location>
</feature>
<feature type="modified residue" description="Phosphoserine" evidence="3">
    <location>
        <position position="205"/>
    </location>
</feature>
<feature type="modified residue" description="Phosphoserine" evidence="8">
    <location>
        <position position="207"/>
    </location>
</feature>
<feature type="modified residue" description="Phosphoserine" evidence="3">
    <location>
        <position position="210"/>
    </location>
</feature>
<feature type="modified residue" description="Phosphoserine" evidence="2">
    <location>
        <position position="312"/>
    </location>
</feature>
<feature type="modified residue" description="Phosphoserine" evidence="2">
    <location>
        <position position="332"/>
    </location>
</feature>
<feature type="modified residue" description="Phosphoserine" evidence="8">
    <location>
        <position position="368"/>
    </location>
</feature>
<feature type="modified residue" description="Phosphoserine" evidence="8">
    <location>
        <position position="371"/>
    </location>
</feature>
<feature type="sequence conflict" description="In Ref. 1; BAB25335." evidence="6" ref="1">
    <original>A</original>
    <variation>V</variation>
    <location>
        <position position="286"/>
    </location>
</feature>
<feature type="sequence conflict" description="In Ref. 1; BAB25335." evidence="6" ref="1">
    <original>T</original>
    <variation>A</variation>
    <location>
        <position position="325"/>
    </location>
</feature>
<feature type="sequence conflict" description="In Ref. 1; BAB25335." evidence="6" ref="1">
    <original>T</original>
    <variation>A</variation>
    <location>
        <position position="378"/>
    </location>
</feature>
<keyword id="KW-0133">Cell shape</keyword>
<keyword id="KW-0963">Cytoplasm</keyword>
<keyword id="KW-0206">Cytoskeleton</keyword>
<keyword id="KW-0472">Membrane</keyword>
<keyword id="KW-0488">Methylation</keyword>
<keyword id="KW-0597">Phosphoprotein</keyword>
<keyword id="KW-1185">Reference proteome</keyword>
<keyword id="KW-0677">Repeat</keyword>
<organism>
    <name type="scientific">Mus musculus</name>
    <name type="common">Mouse</name>
    <dbReference type="NCBI Taxonomy" id="10090"/>
    <lineage>
        <taxon>Eukaryota</taxon>
        <taxon>Metazoa</taxon>
        <taxon>Chordata</taxon>
        <taxon>Craniata</taxon>
        <taxon>Vertebrata</taxon>
        <taxon>Euteleostomi</taxon>
        <taxon>Mammalia</taxon>
        <taxon>Eutheria</taxon>
        <taxon>Euarchontoglires</taxon>
        <taxon>Glires</taxon>
        <taxon>Rodentia</taxon>
        <taxon>Myomorpha</taxon>
        <taxon>Muroidea</taxon>
        <taxon>Muridae</taxon>
        <taxon>Murinae</taxon>
        <taxon>Mus</taxon>
        <taxon>Mus</taxon>
    </lineage>
</organism>